<comment type="subcellular location">
    <subcellularLocation>
        <location evidence="1">Secreted</location>
    </subcellularLocation>
</comment>
<comment type="similarity">
    <text evidence="2">Belongs to the peptidase S1B family.</text>
</comment>
<reference key="1">
    <citation type="submission" date="2007-05" db="EMBL/GenBank/DDBJ databases">
        <title>Complete sequence of chromosome of Staphylococcus aureus subsp. aureus JH9.</title>
        <authorList>
            <consortium name="US DOE Joint Genome Institute"/>
            <person name="Copeland A."/>
            <person name="Lucas S."/>
            <person name="Lapidus A."/>
            <person name="Barry K."/>
            <person name="Detter J.C."/>
            <person name="Glavina del Rio T."/>
            <person name="Hammon N."/>
            <person name="Israni S."/>
            <person name="Pitluck S."/>
            <person name="Chain P."/>
            <person name="Malfatti S."/>
            <person name="Shin M."/>
            <person name="Vergez L."/>
            <person name="Schmutz J."/>
            <person name="Larimer F."/>
            <person name="Land M."/>
            <person name="Hauser L."/>
            <person name="Kyrpides N."/>
            <person name="Kim E."/>
            <person name="Tomasz A."/>
            <person name="Richardson P."/>
        </authorList>
    </citation>
    <scope>NUCLEOTIDE SEQUENCE [LARGE SCALE GENOMIC DNA]</scope>
    <source>
        <strain>JH9</strain>
    </source>
</reference>
<accession>A5ITX8</accession>
<evidence type="ECO:0000250" key="1"/>
<evidence type="ECO:0000305" key="2"/>
<sequence>MNKNVMVKGLTALTILTSLGFAENISNQPHSIAKAEKNVKEITDATKAPYNSVVAFAGGTGVVVGKNTIVTNKHIAKSNDIFKNRVAAHYSSKGKGGGNYDVKDIVEYPGKEDLAIVHVHETSTEGLNFNKNVSYTKFAEGAKAKDRISVIGYPKGAQTKYKMFESTGTINHISGTFIEFDAYAQPGNSGSPVLNSKHELIGILYAGSGKDESEKNFGVYFTPQLKEFIQNNIEK</sequence>
<name>SPLA_STAA9</name>
<dbReference type="EC" id="3.4.21.-"/>
<dbReference type="EMBL" id="CP000703">
    <property type="protein sequence ID" value="ABQ49651.1"/>
    <property type="molecule type" value="Genomic_DNA"/>
</dbReference>
<dbReference type="RefSeq" id="WP_001039427.1">
    <property type="nucleotide sequence ID" value="NC_009487.1"/>
</dbReference>
<dbReference type="SMR" id="A5ITX8"/>
<dbReference type="MEROPS" id="S01.503"/>
<dbReference type="KEGG" id="saj:SaurJH9_1864"/>
<dbReference type="HOGENOM" id="CLU_073589_2_0_9"/>
<dbReference type="GO" id="GO:0005576">
    <property type="term" value="C:extracellular region"/>
    <property type="evidence" value="ECO:0007669"/>
    <property type="project" value="UniProtKB-SubCell"/>
</dbReference>
<dbReference type="GO" id="GO:0004252">
    <property type="term" value="F:serine-type endopeptidase activity"/>
    <property type="evidence" value="ECO:0007669"/>
    <property type="project" value="InterPro"/>
</dbReference>
<dbReference type="GO" id="GO:0006508">
    <property type="term" value="P:proteolysis"/>
    <property type="evidence" value="ECO:0007669"/>
    <property type="project" value="UniProtKB-KW"/>
</dbReference>
<dbReference type="Gene3D" id="2.40.10.10">
    <property type="entry name" value="Trypsin-like serine proteases"/>
    <property type="match status" value="2"/>
</dbReference>
<dbReference type="InterPro" id="IPR009003">
    <property type="entry name" value="Peptidase_S1_PA"/>
</dbReference>
<dbReference type="InterPro" id="IPR043504">
    <property type="entry name" value="Peptidase_S1_PA_chymotrypsin"/>
</dbReference>
<dbReference type="InterPro" id="IPR008256">
    <property type="entry name" value="Peptidase_S1B"/>
</dbReference>
<dbReference type="InterPro" id="IPR008353">
    <property type="entry name" value="Peptidase_S1B_tx"/>
</dbReference>
<dbReference type="InterPro" id="IPR001254">
    <property type="entry name" value="Trypsin_dom"/>
</dbReference>
<dbReference type="InterPro" id="IPR028301">
    <property type="entry name" value="V8_his_AS"/>
</dbReference>
<dbReference type="PANTHER" id="PTHR43019:SF23">
    <property type="entry name" value="PROTEASE DO-LIKE 5, CHLOROPLASTIC"/>
    <property type="match status" value="1"/>
</dbReference>
<dbReference type="PANTHER" id="PTHR43019">
    <property type="entry name" value="SERINE ENDOPROTEASE DEGS"/>
    <property type="match status" value="1"/>
</dbReference>
<dbReference type="Pfam" id="PF00089">
    <property type="entry name" value="Trypsin"/>
    <property type="match status" value="1"/>
</dbReference>
<dbReference type="PRINTS" id="PR01774">
    <property type="entry name" value="EXFOLTOXIN"/>
</dbReference>
<dbReference type="PRINTS" id="PR00839">
    <property type="entry name" value="V8PROTEASE"/>
</dbReference>
<dbReference type="SUPFAM" id="SSF50494">
    <property type="entry name" value="Trypsin-like serine proteases"/>
    <property type="match status" value="1"/>
</dbReference>
<dbReference type="PROSITE" id="PS00672">
    <property type="entry name" value="V8_HIS"/>
    <property type="match status" value="1"/>
</dbReference>
<proteinExistence type="inferred from homology"/>
<keyword id="KW-0378">Hydrolase</keyword>
<keyword id="KW-0645">Protease</keyword>
<keyword id="KW-0964">Secreted</keyword>
<keyword id="KW-0720">Serine protease</keyword>
<keyword id="KW-0732">Signal</keyword>
<gene>
    <name type="primary">splA</name>
    <name type="ordered locus">SaurJH9_1864</name>
</gene>
<protein>
    <recommendedName>
        <fullName>Serine protease SplA</fullName>
        <ecNumber>3.4.21.-</ecNumber>
    </recommendedName>
</protein>
<organism>
    <name type="scientific">Staphylococcus aureus (strain JH9)</name>
    <dbReference type="NCBI Taxonomy" id="359786"/>
    <lineage>
        <taxon>Bacteria</taxon>
        <taxon>Bacillati</taxon>
        <taxon>Bacillota</taxon>
        <taxon>Bacilli</taxon>
        <taxon>Bacillales</taxon>
        <taxon>Staphylococcaceae</taxon>
        <taxon>Staphylococcus</taxon>
    </lineage>
</organism>
<feature type="signal peptide" evidence="1">
    <location>
        <begin position="1"/>
        <end position="35"/>
    </location>
</feature>
<feature type="chain" id="PRO_5000247320" description="Serine protease SplA">
    <location>
        <begin position="36"/>
        <end position="235"/>
    </location>
</feature>
<feature type="active site" description="Charge relay system" evidence="1">
    <location>
        <position position="74"/>
    </location>
</feature>
<feature type="active site" description="Charge relay system" evidence="1">
    <location>
        <position position="113"/>
    </location>
</feature>
<feature type="active site" description="Charge relay system" evidence="1">
    <location>
        <position position="189"/>
    </location>
</feature>